<gene>
    <name evidence="2" type="primary">rpmI</name>
</gene>
<comment type="similarity">
    <text evidence="2">Belongs to the bacterial ribosomal protein bL35 family.</text>
</comment>
<organism>
    <name type="scientific">Mycoplasmopsis fermentans</name>
    <name type="common">Mycoplasma fermentans</name>
    <dbReference type="NCBI Taxonomy" id="2115"/>
    <lineage>
        <taxon>Bacteria</taxon>
        <taxon>Bacillati</taxon>
        <taxon>Mycoplasmatota</taxon>
        <taxon>Mycoplasmoidales</taxon>
        <taxon>Metamycoplasmataceae</taxon>
        <taxon>Mycoplasmopsis</taxon>
    </lineage>
</organism>
<keyword id="KW-0687">Ribonucleoprotein</keyword>
<keyword id="KW-0689">Ribosomal protein</keyword>
<proteinExistence type="inferred from homology"/>
<protein>
    <recommendedName>
        <fullName evidence="2">Large ribosomal subunit protein bL35</fullName>
    </recommendedName>
    <alternativeName>
        <fullName evidence="4">50S ribosomal protein L35</fullName>
    </alternativeName>
</protein>
<accession>Q05428</accession>
<feature type="initiator methionine" description="Removed" evidence="1">
    <location>
        <position position="1"/>
    </location>
</feature>
<feature type="chain" id="PRO_0000177379" description="Large ribosomal subunit protein bL35">
    <location>
        <begin position="2"/>
        <end position="62"/>
    </location>
</feature>
<feature type="region of interest" description="Disordered" evidence="3">
    <location>
        <begin position="25"/>
        <end position="62"/>
    </location>
</feature>
<feature type="compositionally biased region" description="Basic and acidic residues" evidence="3">
    <location>
        <begin position="53"/>
        <end position="62"/>
    </location>
</feature>
<name>RL35_MYCFE</name>
<reference key="1">
    <citation type="journal article" date="1993" name="Gene">
        <title>Identification of a putative infC-rpmI-rplT operon flanked by long inverted repeats in Mycoplasma fermentans (incognitus strain).</title>
        <authorList>
            <person name="Hu W.S."/>
            <person name="Wang R.Y.-H."/>
            <person name="Shih J.W.-K."/>
            <person name="Lo S.-C."/>
        </authorList>
    </citation>
    <scope>NUCLEOTIDE SEQUENCE [GENOMIC DNA]</scope>
    <source>
        <strain>Incognitus</strain>
    </source>
</reference>
<sequence>MPKMKTKSALKKRIKITGTGKIMREQAYRSHLSQNKTTKQKRQARKSVQMHSSDVKRFKALI</sequence>
<dbReference type="EMBL" id="M95046">
    <property type="protein sequence ID" value="AAA25414.1"/>
    <property type="molecule type" value="Genomic_DNA"/>
</dbReference>
<dbReference type="PIR" id="JN0654">
    <property type="entry name" value="JN0654"/>
</dbReference>
<dbReference type="SMR" id="Q05428"/>
<dbReference type="OMA" id="PKIKTHR"/>
<dbReference type="GO" id="GO:0022625">
    <property type="term" value="C:cytosolic large ribosomal subunit"/>
    <property type="evidence" value="ECO:0007669"/>
    <property type="project" value="TreeGrafter"/>
</dbReference>
<dbReference type="GO" id="GO:0003735">
    <property type="term" value="F:structural constituent of ribosome"/>
    <property type="evidence" value="ECO:0007669"/>
    <property type="project" value="InterPro"/>
</dbReference>
<dbReference type="GO" id="GO:0006412">
    <property type="term" value="P:translation"/>
    <property type="evidence" value="ECO:0007669"/>
    <property type="project" value="UniProtKB-UniRule"/>
</dbReference>
<dbReference type="FunFam" id="4.10.410.60:FF:000001">
    <property type="entry name" value="50S ribosomal protein L35"/>
    <property type="match status" value="1"/>
</dbReference>
<dbReference type="Gene3D" id="4.10.410.60">
    <property type="match status" value="1"/>
</dbReference>
<dbReference type="HAMAP" id="MF_00514">
    <property type="entry name" value="Ribosomal_bL35"/>
    <property type="match status" value="1"/>
</dbReference>
<dbReference type="InterPro" id="IPR001706">
    <property type="entry name" value="Ribosomal_bL35"/>
</dbReference>
<dbReference type="InterPro" id="IPR021137">
    <property type="entry name" value="Ribosomal_bL35-like"/>
</dbReference>
<dbReference type="InterPro" id="IPR018265">
    <property type="entry name" value="Ribosomal_bL35_CS"/>
</dbReference>
<dbReference type="InterPro" id="IPR037229">
    <property type="entry name" value="Ribosomal_bL35_sf"/>
</dbReference>
<dbReference type="NCBIfam" id="TIGR00001">
    <property type="entry name" value="rpmI_bact"/>
    <property type="match status" value="1"/>
</dbReference>
<dbReference type="PANTHER" id="PTHR33343">
    <property type="entry name" value="54S RIBOSOMAL PROTEIN BL35M"/>
    <property type="match status" value="1"/>
</dbReference>
<dbReference type="PANTHER" id="PTHR33343:SF1">
    <property type="entry name" value="LARGE RIBOSOMAL SUBUNIT PROTEIN BL35M"/>
    <property type="match status" value="1"/>
</dbReference>
<dbReference type="Pfam" id="PF01632">
    <property type="entry name" value="Ribosomal_L35p"/>
    <property type="match status" value="1"/>
</dbReference>
<dbReference type="PRINTS" id="PR00064">
    <property type="entry name" value="RIBOSOMALL35"/>
</dbReference>
<dbReference type="SUPFAM" id="SSF143034">
    <property type="entry name" value="L35p-like"/>
    <property type="match status" value="1"/>
</dbReference>
<dbReference type="PROSITE" id="PS00936">
    <property type="entry name" value="RIBOSOMAL_L35"/>
    <property type="match status" value="1"/>
</dbReference>
<evidence type="ECO:0000250" key="1"/>
<evidence type="ECO:0000255" key="2">
    <source>
        <dbReference type="HAMAP-Rule" id="MF_00514"/>
    </source>
</evidence>
<evidence type="ECO:0000256" key="3">
    <source>
        <dbReference type="SAM" id="MobiDB-lite"/>
    </source>
</evidence>
<evidence type="ECO:0000305" key="4"/>